<reference key="1">
    <citation type="journal article" date="2009" name="PLoS Genet.">
        <title>Organised genome dynamics in the Escherichia coli species results in highly diverse adaptive paths.</title>
        <authorList>
            <person name="Touchon M."/>
            <person name="Hoede C."/>
            <person name="Tenaillon O."/>
            <person name="Barbe V."/>
            <person name="Baeriswyl S."/>
            <person name="Bidet P."/>
            <person name="Bingen E."/>
            <person name="Bonacorsi S."/>
            <person name="Bouchier C."/>
            <person name="Bouvet O."/>
            <person name="Calteau A."/>
            <person name="Chiapello H."/>
            <person name="Clermont O."/>
            <person name="Cruveiller S."/>
            <person name="Danchin A."/>
            <person name="Diard M."/>
            <person name="Dossat C."/>
            <person name="Karoui M.E."/>
            <person name="Frapy E."/>
            <person name="Garry L."/>
            <person name="Ghigo J.M."/>
            <person name="Gilles A.M."/>
            <person name="Johnson J."/>
            <person name="Le Bouguenec C."/>
            <person name="Lescat M."/>
            <person name="Mangenot S."/>
            <person name="Martinez-Jehanne V."/>
            <person name="Matic I."/>
            <person name="Nassif X."/>
            <person name="Oztas S."/>
            <person name="Petit M.A."/>
            <person name="Pichon C."/>
            <person name="Rouy Z."/>
            <person name="Ruf C.S."/>
            <person name="Schneider D."/>
            <person name="Tourret J."/>
            <person name="Vacherie B."/>
            <person name="Vallenet D."/>
            <person name="Medigue C."/>
            <person name="Rocha E.P.C."/>
            <person name="Denamur E."/>
        </authorList>
    </citation>
    <scope>NUCLEOTIDE SEQUENCE [LARGE SCALE GENOMIC DNA]</scope>
    <source>
        <strain>ED1a</strain>
    </source>
</reference>
<protein>
    <recommendedName>
        <fullName evidence="1">UPF0145 protein YbjQ</fullName>
    </recommendedName>
</protein>
<accession>B7MQX0</accession>
<evidence type="ECO:0000255" key="1">
    <source>
        <dbReference type="HAMAP-Rule" id="MF_00338"/>
    </source>
</evidence>
<name>YBJQ_ECO81</name>
<comment type="similarity">
    <text evidence="1">Belongs to the UPF0145 family.</text>
</comment>
<proteinExistence type="inferred from homology"/>
<organism>
    <name type="scientific">Escherichia coli O81 (strain ED1a)</name>
    <dbReference type="NCBI Taxonomy" id="585397"/>
    <lineage>
        <taxon>Bacteria</taxon>
        <taxon>Pseudomonadati</taxon>
        <taxon>Pseudomonadota</taxon>
        <taxon>Gammaproteobacteria</taxon>
        <taxon>Enterobacterales</taxon>
        <taxon>Enterobacteriaceae</taxon>
        <taxon>Escherichia</taxon>
    </lineage>
</organism>
<dbReference type="EMBL" id="CU928162">
    <property type="protein sequence ID" value="CAR07037.1"/>
    <property type="molecule type" value="Genomic_DNA"/>
</dbReference>
<dbReference type="RefSeq" id="WP_001160737.1">
    <property type="nucleotide sequence ID" value="NC_011745.1"/>
</dbReference>
<dbReference type="SMR" id="B7MQX0"/>
<dbReference type="KEGG" id="ecq:ECED1_0833"/>
<dbReference type="HOGENOM" id="CLU_117144_3_0_6"/>
<dbReference type="Proteomes" id="UP000000748">
    <property type="component" value="Chromosome"/>
</dbReference>
<dbReference type="Gene3D" id="3.30.110.70">
    <property type="entry name" value="Hypothetical protein apc22750. Chain B"/>
    <property type="match status" value="1"/>
</dbReference>
<dbReference type="HAMAP" id="MF_00338">
    <property type="entry name" value="UPF0145"/>
    <property type="match status" value="1"/>
</dbReference>
<dbReference type="InterPro" id="IPR035439">
    <property type="entry name" value="UPF0145_dom_sf"/>
</dbReference>
<dbReference type="InterPro" id="IPR002765">
    <property type="entry name" value="UPF0145_YbjQ-like"/>
</dbReference>
<dbReference type="NCBIfam" id="NF002776">
    <property type="entry name" value="PRK02877.1"/>
    <property type="match status" value="1"/>
</dbReference>
<dbReference type="PANTHER" id="PTHR34068">
    <property type="entry name" value="UPF0145 PROTEIN YBJQ"/>
    <property type="match status" value="1"/>
</dbReference>
<dbReference type="PANTHER" id="PTHR34068:SF1">
    <property type="entry name" value="UPF0145 PROTEIN YBJQ"/>
    <property type="match status" value="1"/>
</dbReference>
<dbReference type="Pfam" id="PF01906">
    <property type="entry name" value="YbjQ_1"/>
    <property type="match status" value="1"/>
</dbReference>
<dbReference type="SUPFAM" id="SSF117782">
    <property type="entry name" value="YbjQ-like"/>
    <property type="match status" value="1"/>
</dbReference>
<feature type="chain" id="PRO_1000200230" description="UPF0145 protein YbjQ">
    <location>
        <begin position="1"/>
        <end position="107"/>
    </location>
</feature>
<sequence>MQFSTTPTLEGQTIVEYCGVVTGEAILGANIFRDFFAGIRDIVGGRSGAYEKELRKAREIAFEELGSQARALGADAVVGIDIDYETVGQNGSMLMVSVSGTAVKTRR</sequence>
<gene>
    <name evidence="1" type="primary">ybjQ</name>
    <name type="ordered locus">ECED1_0833</name>
</gene>